<reference key="1">
    <citation type="journal article" date="2009" name="J. Bacteriol.">
        <title>The genome of Burkholderia cenocepacia J2315, an epidemic pathogen of cystic fibrosis patients.</title>
        <authorList>
            <person name="Holden M.T."/>
            <person name="Seth-Smith H.M."/>
            <person name="Crossman L.C."/>
            <person name="Sebaihia M."/>
            <person name="Bentley S.D."/>
            <person name="Cerdeno-Tarraga A.M."/>
            <person name="Thomson N.R."/>
            <person name="Bason N."/>
            <person name="Quail M.A."/>
            <person name="Sharp S."/>
            <person name="Cherevach I."/>
            <person name="Churcher C."/>
            <person name="Goodhead I."/>
            <person name="Hauser H."/>
            <person name="Holroyd N."/>
            <person name="Mungall K."/>
            <person name="Scott P."/>
            <person name="Walker D."/>
            <person name="White B."/>
            <person name="Rose H."/>
            <person name="Iversen P."/>
            <person name="Mil-Homens D."/>
            <person name="Rocha E.P."/>
            <person name="Fialho A.M."/>
            <person name="Baldwin A."/>
            <person name="Dowson C."/>
            <person name="Barrell B.G."/>
            <person name="Govan J.R."/>
            <person name="Vandamme P."/>
            <person name="Hart C.A."/>
            <person name="Mahenthiralingam E."/>
            <person name="Parkhill J."/>
        </authorList>
    </citation>
    <scope>NUCLEOTIDE SEQUENCE [LARGE SCALE GENOMIC DNA]</scope>
    <source>
        <strain>ATCC BAA-245 / DSM 16553 / LMG 16656 / NCTC 13227 / J2315 / CF5610</strain>
    </source>
</reference>
<gene>
    <name evidence="1" type="primary">nadD</name>
    <name type="ordered locus">BceJ2315_23510</name>
    <name type="ORF">BCAL2391</name>
</gene>
<evidence type="ECO:0000255" key="1">
    <source>
        <dbReference type="HAMAP-Rule" id="MF_00244"/>
    </source>
</evidence>
<proteinExistence type="inferred from homology"/>
<sequence length="218" mass="23909">MLGGTFDPIHDGHLALARRFAELLDLTELVLLPAGQPYQKRDVSAAEHRLAMTRAAAGTLSVPGVTVTVATDEIEHTGPTYTVETLARWRERIGPDASLSLLIGADQLVRLDTWRDWRTLFDYAHIGVSTRPGFELGAAPPDVAREIAARQARADVLKATPAGRLLIDTTLSFDIAATDIRAHLRECIARHAQMPDASAEHVPAAVWAYILQHRLYHS</sequence>
<name>NADD_BURCJ</name>
<feature type="chain" id="PRO_1000100764" description="Probable nicotinate-nucleotide adenylyltransferase">
    <location>
        <begin position="1"/>
        <end position="218"/>
    </location>
</feature>
<protein>
    <recommendedName>
        <fullName evidence="1">Probable nicotinate-nucleotide adenylyltransferase</fullName>
        <ecNumber evidence="1">2.7.7.18</ecNumber>
    </recommendedName>
    <alternativeName>
        <fullName evidence="1">Deamido-NAD(+) diphosphorylase</fullName>
    </alternativeName>
    <alternativeName>
        <fullName evidence="1">Deamido-NAD(+) pyrophosphorylase</fullName>
    </alternativeName>
    <alternativeName>
        <fullName evidence="1">Nicotinate mononucleotide adenylyltransferase</fullName>
        <shortName evidence="1">NaMN adenylyltransferase</shortName>
    </alternativeName>
</protein>
<accession>B4E5R9</accession>
<organism>
    <name type="scientific">Burkholderia cenocepacia (strain ATCC BAA-245 / DSM 16553 / LMG 16656 / NCTC 13227 / J2315 / CF5610)</name>
    <name type="common">Burkholderia cepacia (strain J2315)</name>
    <dbReference type="NCBI Taxonomy" id="216591"/>
    <lineage>
        <taxon>Bacteria</taxon>
        <taxon>Pseudomonadati</taxon>
        <taxon>Pseudomonadota</taxon>
        <taxon>Betaproteobacteria</taxon>
        <taxon>Burkholderiales</taxon>
        <taxon>Burkholderiaceae</taxon>
        <taxon>Burkholderia</taxon>
        <taxon>Burkholderia cepacia complex</taxon>
    </lineage>
</organism>
<keyword id="KW-0067">ATP-binding</keyword>
<keyword id="KW-0520">NAD</keyword>
<keyword id="KW-0547">Nucleotide-binding</keyword>
<keyword id="KW-0548">Nucleotidyltransferase</keyword>
<keyword id="KW-0662">Pyridine nucleotide biosynthesis</keyword>
<keyword id="KW-0808">Transferase</keyword>
<comment type="function">
    <text evidence="1">Catalyzes the reversible adenylation of nicotinate mononucleotide (NaMN) to nicotinic acid adenine dinucleotide (NaAD).</text>
</comment>
<comment type="catalytic activity">
    <reaction evidence="1">
        <text>nicotinate beta-D-ribonucleotide + ATP + H(+) = deamido-NAD(+) + diphosphate</text>
        <dbReference type="Rhea" id="RHEA:22860"/>
        <dbReference type="ChEBI" id="CHEBI:15378"/>
        <dbReference type="ChEBI" id="CHEBI:30616"/>
        <dbReference type="ChEBI" id="CHEBI:33019"/>
        <dbReference type="ChEBI" id="CHEBI:57502"/>
        <dbReference type="ChEBI" id="CHEBI:58437"/>
        <dbReference type="EC" id="2.7.7.18"/>
    </reaction>
</comment>
<comment type="pathway">
    <text evidence="1">Cofactor biosynthesis; NAD(+) biosynthesis; deamido-NAD(+) from nicotinate D-ribonucleotide: step 1/1.</text>
</comment>
<comment type="similarity">
    <text evidence="1">Belongs to the NadD family.</text>
</comment>
<dbReference type="EC" id="2.7.7.18" evidence="1"/>
<dbReference type="EMBL" id="AM747720">
    <property type="protein sequence ID" value="CAR52692.1"/>
    <property type="molecule type" value="Genomic_DNA"/>
</dbReference>
<dbReference type="SMR" id="B4E5R9"/>
<dbReference type="KEGG" id="bcj:BCAL2391"/>
<dbReference type="eggNOG" id="COG1057">
    <property type="taxonomic scope" value="Bacteria"/>
</dbReference>
<dbReference type="HOGENOM" id="CLU_069765_0_0_4"/>
<dbReference type="UniPathway" id="UPA00253">
    <property type="reaction ID" value="UER00332"/>
</dbReference>
<dbReference type="Proteomes" id="UP000001035">
    <property type="component" value="Chromosome 1"/>
</dbReference>
<dbReference type="GO" id="GO:0005524">
    <property type="term" value="F:ATP binding"/>
    <property type="evidence" value="ECO:0007669"/>
    <property type="project" value="UniProtKB-KW"/>
</dbReference>
<dbReference type="GO" id="GO:0004515">
    <property type="term" value="F:nicotinate-nucleotide adenylyltransferase activity"/>
    <property type="evidence" value="ECO:0007669"/>
    <property type="project" value="UniProtKB-UniRule"/>
</dbReference>
<dbReference type="GO" id="GO:0009435">
    <property type="term" value="P:NAD biosynthetic process"/>
    <property type="evidence" value="ECO:0007669"/>
    <property type="project" value="UniProtKB-UniRule"/>
</dbReference>
<dbReference type="CDD" id="cd02165">
    <property type="entry name" value="NMNAT"/>
    <property type="match status" value="1"/>
</dbReference>
<dbReference type="Gene3D" id="3.40.50.620">
    <property type="entry name" value="HUPs"/>
    <property type="match status" value="1"/>
</dbReference>
<dbReference type="HAMAP" id="MF_00244">
    <property type="entry name" value="NaMN_adenylyltr"/>
    <property type="match status" value="1"/>
</dbReference>
<dbReference type="InterPro" id="IPR004821">
    <property type="entry name" value="Cyt_trans-like"/>
</dbReference>
<dbReference type="InterPro" id="IPR005248">
    <property type="entry name" value="NadD/NMNAT"/>
</dbReference>
<dbReference type="InterPro" id="IPR014729">
    <property type="entry name" value="Rossmann-like_a/b/a_fold"/>
</dbReference>
<dbReference type="NCBIfam" id="TIGR00125">
    <property type="entry name" value="cyt_tran_rel"/>
    <property type="match status" value="1"/>
</dbReference>
<dbReference type="NCBIfam" id="TIGR00482">
    <property type="entry name" value="nicotinate (nicotinamide) nucleotide adenylyltransferase"/>
    <property type="match status" value="1"/>
</dbReference>
<dbReference type="NCBIfam" id="NF005410">
    <property type="entry name" value="PRK06973.1"/>
    <property type="match status" value="1"/>
</dbReference>
<dbReference type="PANTHER" id="PTHR39321">
    <property type="entry name" value="NICOTINATE-NUCLEOTIDE ADENYLYLTRANSFERASE-RELATED"/>
    <property type="match status" value="1"/>
</dbReference>
<dbReference type="PANTHER" id="PTHR39321:SF3">
    <property type="entry name" value="PHOSPHOPANTETHEINE ADENYLYLTRANSFERASE"/>
    <property type="match status" value="1"/>
</dbReference>
<dbReference type="Pfam" id="PF01467">
    <property type="entry name" value="CTP_transf_like"/>
    <property type="match status" value="1"/>
</dbReference>
<dbReference type="SUPFAM" id="SSF52374">
    <property type="entry name" value="Nucleotidylyl transferase"/>
    <property type="match status" value="1"/>
</dbReference>